<proteinExistence type="inferred from homology"/>
<protein>
    <recommendedName>
        <fullName evidence="1">Sulfate adenylyltransferase subunit 2</fullName>
        <ecNumber evidence="1">2.7.7.4</ecNumber>
    </recommendedName>
    <alternativeName>
        <fullName evidence="1">ATP-sulfurylase small subunit</fullName>
    </alternativeName>
    <alternativeName>
        <fullName evidence="1">Sulfate adenylate transferase</fullName>
        <shortName evidence="1">SAT</shortName>
    </alternativeName>
</protein>
<gene>
    <name evidence="1" type="primary">cysD</name>
    <name type="ordered locus">SDY_2951</name>
</gene>
<feature type="chain" id="PRO_1000008994" description="Sulfate adenylyltransferase subunit 2">
    <location>
        <begin position="1"/>
        <end position="302"/>
    </location>
</feature>
<sequence>MDQIRLTHLRQLEAESIHIIREVAAEFSNPVMLYSIGKDSSVMLHLARKAFYPGTLPFPLLHVDTGWKFREMYEFRDRTAKAYGCELLVHKNPEGVAMGINPFIHGSAKHTDIMKTEGLKQALNKYGFDAAFVGARRDEEKSRAKERIYSFRDRFHRWDPKNQRPELWHNYNGQINKGESIRVFPLSNWTEQDIWQYIWLENIDIVPLYLAAERPVLERDGMLMMIDDNRIDLQPGEVIKKRMVRFRTLGCWPLTGAVESNAQTLPEIIEEMLVSTTSERQGRVIDRDQAGSMELKKRQGYF</sequence>
<evidence type="ECO:0000255" key="1">
    <source>
        <dbReference type="HAMAP-Rule" id="MF_00064"/>
    </source>
</evidence>
<keyword id="KW-0067">ATP-binding</keyword>
<keyword id="KW-0547">Nucleotide-binding</keyword>
<keyword id="KW-0548">Nucleotidyltransferase</keyword>
<keyword id="KW-1185">Reference proteome</keyword>
<keyword id="KW-0808">Transferase</keyword>
<organism>
    <name type="scientific">Shigella dysenteriae serotype 1 (strain Sd197)</name>
    <dbReference type="NCBI Taxonomy" id="300267"/>
    <lineage>
        <taxon>Bacteria</taxon>
        <taxon>Pseudomonadati</taxon>
        <taxon>Pseudomonadota</taxon>
        <taxon>Gammaproteobacteria</taxon>
        <taxon>Enterobacterales</taxon>
        <taxon>Enterobacteriaceae</taxon>
        <taxon>Shigella</taxon>
    </lineage>
</organism>
<dbReference type="EC" id="2.7.7.4" evidence="1"/>
<dbReference type="EMBL" id="CP000034">
    <property type="protein sequence ID" value="ABB62977.1"/>
    <property type="molecule type" value="Genomic_DNA"/>
</dbReference>
<dbReference type="RefSeq" id="WP_000372107.1">
    <property type="nucleotide sequence ID" value="NC_007606.1"/>
</dbReference>
<dbReference type="RefSeq" id="YP_404468.1">
    <property type="nucleotide sequence ID" value="NC_007606.1"/>
</dbReference>
<dbReference type="SMR" id="Q32CH8"/>
<dbReference type="STRING" id="300267.SDY_2951"/>
<dbReference type="EnsemblBacteria" id="ABB62977">
    <property type="protein sequence ID" value="ABB62977"/>
    <property type="gene ID" value="SDY_2951"/>
</dbReference>
<dbReference type="KEGG" id="sdy:SDY_2951"/>
<dbReference type="PATRIC" id="fig|300267.13.peg.3543"/>
<dbReference type="HOGENOM" id="CLU_043026_0_0_6"/>
<dbReference type="UniPathway" id="UPA00140">
    <property type="reaction ID" value="UER00204"/>
</dbReference>
<dbReference type="Proteomes" id="UP000002716">
    <property type="component" value="Chromosome"/>
</dbReference>
<dbReference type="GO" id="GO:0005524">
    <property type="term" value="F:ATP binding"/>
    <property type="evidence" value="ECO:0007669"/>
    <property type="project" value="UniProtKB-KW"/>
</dbReference>
<dbReference type="GO" id="GO:0004781">
    <property type="term" value="F:sulfate adenylyltransferase (ATP) activity"/>
    <property type="evidence" value="ECO:0007669"/>
    <property type="project" value="UniProtKB-UniRule"/>
</dbReference>
<dbReference type="GO" id="GO:0070814">
    <property type="term" value="P:hydrogen sulfide biosynthetic process"/>
    <property type="evidence" value="ECO:0007669"/>
    <property type="project" value="UniProtKB-UniRule"/>
</dbReference>
<dbReference type="GO" id="GO:0000103">
    <property type="term" value="P:sulfate assimilation"/>
    <property type="evidence" value="ECO:0007669"/>
    <property type="project" value="UniProtKB-UniRule"/>
</dbReference>
<dbReference type="CDD" id="cd23946">
    <property type="entry name" value="Sulfate_adenylyltransferase_2"/>
    <property type="match status" value="1"/>
</dbReference>
<dbReference type="FunFam" id="3.40.50.620:FF:000002">
    <property type="entry name" value="Sulfate adenylyltransferase subunit 2"/>
    <property type="match status" value="1"/>
</dbReference>
<dbReference type="Gene3D" id="3.40.50.620">
    <property type="entry name" value="HUPs"/>
    <property type="match status" value="1"/>
</dbReference>
<dbReference type="HAMAP" id="MF_00064">
    <property type="entry name" value="Sulf_adenylyltr_sub2"/>
    <property type="match status" value="1"/>
</dbReference>
<dbReference type="InterPro" id="IPR002500">
    <property type="entry name" value="PAPS_reduct_dom"/>
</dbReference>
<dbReference type="InterPro" id="IPR014729">
    <property type="entry name" value="Rossmann-like_a/b/a_fold"/>
</dbReference>
<dbReference type="InterPro" id="IPR011784">
    <property type="entry name" value="SO4_adenylTrfase_ssu"/>
</dbReference>
<dbReference type="InterPro" id="IPR050128">
    <property type="entry name" value="Sulfate_adenylyltrnsfr_sub2"/>
</dbReference>
<dbReference type="NCBIfam" id="TIGR02039">
    <property type="entry name" value="CysD"/>
    <property type="match status" value="1"/>
</dbReference>
<dbReference type="NCBIfam" id="NF003587">
    <property type="entry name" value="PRK05253.1"/>
    <property type="match status" value="1"/>
</dbReference>
<dbReference type="NCBIfam" id="NF009214">
    <property type="entry name" value="PRK12563.1"/>
    <property type="match status" value="1"/>
</dbReference>
<dbReference type="PANTHER" id="PTHR43196">
    <property type="entry name" value="SULFATE ADENYLYLTRANSFERASE SUBUNIT 2"/>
    <property type="match status" value="1"/>
</dbReference>
<dbReference type="PANTHER" id="PTHR43196:SF1">
    <property type="entry name" value="SULFATE ADENYLYLTRANSFERASE SUBUNIT 2"/>
    <property type="match status" value="1"/>
</dbReference>
<dbReference type="Pfam" id="PF01507">
    <property type="entry name" value="PAPS_reduct"/>
    <property type="match status" value="1"/>
</dbReference>
<dbReference type="PIRSF" id="PIRSF002936">
    <property type="entry name" value="CysDAde_trans"/>
    <property type="match status" value="1"/>
</dbReference>
<dbReference type="SUPFAM" id="SSF52402">
    <property type="entry name" value="Adenine nucleotide alpha hydrolases-like"/>
    <property type="match status" value="1"/>
</dbReference>
<name>CYSD_SHIDS</name>
<accession>Q32CH8</accession>
<reference key="1">
    <citation type="journal article" date="2005" name="Nucleic Acids Res.">
        <title>Genome dynamics and diversity of Shigella species, the etiologic agents of bacillary dysentery.</title>
        <authorList>
            <person name="Yang F."/>
            <person name="Yang J."/>
            <person name="Zhang X."/>
            <person name="Chen L."/>
            <person name="Jiang Y."/>
            <person name="Yan Y."/>
            <person name="Tang X."/>
            <person name="Wang J."/>
            <person name="Xiong Z."/>
            <person name="Dong J."/>
            <person name="Xue Y."/>
            <person name="Zhu Y."/>
            <person name="Xu X."/>
            <person name="Sun L."/>
            <person name="Chen S."/>
            <person name="Nie H."/>
            <person name="Peng J."/>
            <person name="Xu J."/>
            <person name="Wang Y."/>
            <person name="Yuan Z."/>
            <person name="Wen Y."/>
            <person name="Yao Z."/>
            <person name="Shen Y."/>
            <person name="Qiang B."/>
            <person name="Hou Y."/>
            <person name="Yu J."/>
            <person name="Jin Q."/>
        </authorList>
    </citation>
    <scope>NUCLEOTIDE SEQUENCE [LARGE SCALE GENOMIC DNA]</scope>
    <source>
        <strain>Sd197</strain>
    </source>
</reference>
<comment type="function">
    <text evidence="1">With CysN forms the ATP sulfurylase (ATPS) that catalyzes the adenylation of sulfate producing adenosine 5'-phosphosulfate (APS) and diphosphate, the first enzymatic step in sulfur assimilation pathway. APS synthesis involves the formation of a high-energy phosphoric-sulfuric acid anhydride bond driven by GTP hydrolysis by CysN coupled to ATP hydrolysis by CysD.</text>
</comment>
<comment type="catalytic activity">
    <reaction evidence="1">
        <text>sulfate + ATP + H(+) = adenosine 5'-phosphosulfate + diphosphate</text>
        <dbReference type="Rhea" id="RHEA:18133"/>
        <dbReference type="ChEBI" id="CHEBI:15378"/>
        <dbReference type="ChEBI" id="CHEBI:16189"/>
        <dbReference type="ChEBI" id="CHEBI:30616"/>
        <dbReference type="ChEBI" id="CHEBI:33019"/>
        <dbReference type="ChEBI" id="CHEBI:58243"/>
        <dbReference type="EC" id="2.7.7.4"/>
    </reaction>
</comment>
<comment type="pathway">
    <text evidence="1">Sulfur metabolism; hydrogen sulfide biosynthesis; sulfite from sulfate: step 1/3.</text>
</comment>
<comment type="subunit">
    <text evidence="1">Heterodimer composed of CysD, the smaller subunit, and CysN.</text>
</comment>
<comment type="similarity">
    <text evidence="1">Belongs to the PAPS reductase family. CysD subfamily.</text>
</comment>